<reference key="1">
    <citation type="journal article" date="2008" name="Proc. Natl. Acad. Sci. U.S.A.">
        <title>The genome of Clostridium kluyveri, a strict anaerobe with unique metabolic features.</title>
        <authorList>
            <person name="Seedorf H."/>
            <person name="Fricke W.F."/>
            <person name="Veith B."/>
            <person name="Brueggemann H."/>
            <person name="Liesegang H."/>
            <person name="Strittmatter A."/>
            <person name="Miethke M."/>
            <person name="Buckel W."/>
            <person name="Hinderberger J."/>
            <person name="Li F."/>
            <person name="Hagemeier C."/>
            <person name="Thauer R.K."/>
            <person name="Gottschalk G."/>
        </authorList>
    </citation>
    <scope>NUCLEOTIDE SEQUENCE [LARGE SCALE GENOMIC DNA]</scope>
    <source>
        <strain>ATCC 8527 / DSM 555 / NBRC 12016 / NCIMB 10680 / K1</strain>
    </source>
</reference>
<evidence type="ECO:0000255" key="1">
    <source>
        <dbReference type="HAMAP-Rule" id="MF_00203"/>
    </source>
</evidence>
<comment type="function">
    <text evidence="1">The UvrABC repair system catalyzes the recognition and processing of DNA lesions. UvrC both incises the 5' and 3' sides of the lesion. The N-terminal half is responsible for the 3' incision and the C-terminal half is responsible for the 5' incision.</text>
</comment>
<comment type="subunit">
    <text evidence="1">Interacts with UvrB in an incision complex.</text>
</comment>
<comment type="subcellular location">
    <subcellularLocation>
        <location evidence="1">Cytoplasm</location>
    </subcellularLocation>
</comment>
<comment type="similarity">
    <text evidence="1">Belongs to the UvrC family.</text>
</comment>
<protein>
    <recommendedName>
        <fullName evidence="1">UvrABC system protein C</fullName>
        <shortName evidence="1">Protein UvrC</shortName>
    </recommendedName>
    <alternativeName>
        <fullName evidence="1">Excinuclease ABC subunit C</fullName>
    </alternativeName>
</protein>
<dbReference type="EMBL" id="CP000673">
    <property type="protein sequence ID" value="EDK35557.1"/>
    <property type="molecule type" value="Genomic_DNA"/>
</dbReference>
<dbReference type="RefSeq" id="WP_012103889.1">
    <property type="nucleotide sequence ID" value="NC_009706.1"/>
</dbReference>
<dbReference type="SMR" id="A5N361"/>
<dbReference type="STRING" id="431943.CKL_3566"/>
<dbReference type="KEGG" id="ckl:CKL_3566"/>
<dbReference type="eggNOG" id="COG0322">
    <property type="taxonomic scope" value="Bacteria"/>
</dbReference>
<dbReference type="HOGENOM" id="CLU_014841_3_2_9"/>
<dbReference type="Proteomes" id="UP000002411">
    <property type="component" value="Chromosome"/>
</dbReference>
<dbReference type="GO" id="GO:0005737">
    <property type="term" value="C:cytoplasm"/>
    <property type="evidence" value="ECO:0007669"/>
    <property type="project" value="UniProtKB-SubCell"/>
</dbReference>
<dbReference type="GO" id="GO:0009380">
    <property type="term" value="C:excinuclease repair complex"/>
    <property type="evidence" value="ECO:0007669"/>
    <property type="project" value="InterPro"/>
</dbReference>
<dbReference type="GO" id="GO:0003677">
    <property type="term" value="F:DNA binding"/>
    <property type="evidence" value="ECO:0007669"/>
    <property type="project" value="UniProtKB-UniRule"/>
</dbReference>
<dbReference type="GO" id="GO:0009381">
    <property type="term" value="F:excinuclease ABC activity"/>
    <property type="evidence" value="ECO:0007669"/>
    <property type="project" value="UniProtKB-UniRule"/>
</dbReference>
<dbReference type="GO" id="GO:0006289">
    <property type="term" value="P:nucleotide-excision repair"/>
    <property type="evidence" value="ECO:0007669"/>
    <property type="project" value="UniProtKB-UniRule"/>
</dbReference>
<dbReference type="GO" id="GO:0009432">
    <property type="term" value="P:SOS response"/>
    <property type="evidence" value="ECO:0007669"/>
    <property type="project" value="UniProtKB-UniRule"/>
</dbReference>
<dbReference type="CDD" id="cd10434">
    <property type="entry name" value="GIY-YIG_UvrC_Cho"/>
    <property type="match status" value="1"/>
</dbReference>
<dbReference type="FunFam" id="3.40.1440.10:FF:000001">
    <property type="entry name" value="UvrABC system protein C"/>
    <property type="match status" value="1"/>
</dbReference>
<dbReference type="Gene3D" id="1.10.150.20">
    <property type="entry name" value="5' to 3' exonuclease, C-terminal subdomain"/>
    <property type="match status" value="1"/>
</dbReference>
<dbReference type="Gene3D" id="3.40.1440.10">
    <property type="entry name" value="GIY-YIG endonuclease"/>
    <property type="match status" value="1"/>
</dbReference>
<dbReference type="Gene3D" id="4.10.860.10">
    <property type="entry name" value="UVR domain"/>
    <property type="match status" value="1"/>
</dbReference>
<dbReference type="Gene3D" id="3.30.420.340">
    <property type="entry name" value="UvrC, RNAse H endonuclease domain"/>
    <property type="match status" value="1"/>
</dbReference>
<dbReference type="HAMAP" id="MF_00203">
    <property type="entry name" value="UvrC"/>
    <property type="match status" value="1"/>
</dbReference>
<dbReference type="InterPro" id="IPR041663">
    <property type="entry name" value="DisA/LigA_HHH"/>
</dbReference>
<dbReference type="InterPro" id="IPR000305">
    <property type="entry name" value="GIY-YIG_endonuc"/>
</dbReference>
<dbReference type="InterPro" id="IPR035901">
    <property type="entry name" value="GIY-YIG_endonuc_sf"/>
</dbReference>
<dbReference type="InterPro" id="IPR047296">
    <property type="entry name" value="GIY-YIG_UvrC_Cho"/>
</dbReference>
<dbReference type="InterPro" id="IPR010994">
    <property type="entry name" value="RuvA_2-like"/>
</dbReference>
<dbReference type="InterPro" id="IPR001943">
    <property type="entry name" value="UVR_dom"/>
</dbReference>
<dbReference type="InterPro" id="IPR036876">
    <property type="entry name" value="UVR_dom_sf"/>
</dbReference>
<dbReference type="InterPro" id="IPR050066">
    <property type="entry name" value="UvrABC_protein_C"/>
</dbReference>
<dbReference type="InterPro" id="IPR004791">
    <property type="entry name" value="UvrC"/>
</dbReference>
<dbReference type="InterPro" id="IPR001162">
    <property type="entry name" value="UvrC_RNase_H_dom"/>
</dbReference>
<dbReference type="InterPro" id="IPR038476">
    <property type="entry name" value="UvrC_RNase_H_dom_sf"/>
</dbReference>
<dbReference type="NCBIfam" id="NF001824">
    <property type="entry name" value="PRK00558.1-5"/>
    <property type="match status" value="1"/>
</dbReference>
<dbReference type="NCBIfam" id="TIGR00194">
    <property type="entry name" value="uvrC"/>
    <property type="match status" value="1"/>
</dbReference>
<dbReference type="PANTHER" id="PTHR30562:SF1">
    <property type="entry name" value="UVRABC SYSTEM PROTEIN C"/>
    <property type="match status" value="1"/>
</dbReference>
<dbReference type="PANTHER" id="PTHR30562">
    <property type="entry name" value="UVRC/OXIDOREDUCTASE"/>
    <property type="match status" value="1"/>
</dbReference>
<dbReference type="Pfam" id="PF01541">
    <property type="entry name" value="GIY-YIG"/>
    <property type="match status" value="1"/>
</dbReference>
<dbReference type="Pfam" id="PF12826">
    <property type="entry name" value="HHH_2"/>
    <property type="match status" value="1"/>
</dbReference>
<dbReference type="Pfam" id="PF02151">
    <property type="entry name" value="UVR"/>
    <property type="match status" value="1"/>
</dbReference>
<dbReference type="Pfam" id="PF22920">
    <property type="entry name" value="UvrC_RNaseH"/>
    <property type="match status" value="1"/>
</dbReference>
<dbReference type="Pfam" id="PF08459">
    <property type="entry name" value="UvrC_RNaseH_dom"/>
    <property type="match status" value="1"/>
</dbReference>
<dbReference type="SMART" id="SM00465">
    <property type="entry name" value="GIYc"/>
    <property type="match status" value="1"/>
</dbReference>
<dbReference type="SUPFAM" id="SSF46600">
    <property type="entry name" value="C-terminal UvrC-binding domain of UvrB"/>
    <property type="match status" value="1"/>
</dbReference>
<dbReference type="SUPFAM" id="SSF82771">
    <property type="entry name" value="GIY-YIG endonuclease"/>
    <property type="match status" value="1"/>
</dbReference>
<dbReference type="SUPFAM" id="SSF47781">
    <property type="entry name" value="RuvA domain 2-like"/>
    <property type="match status" value="1"/>
</dbReference>
<dbReference type="PROSITE" id="PS50164">
    <property type="entry name" value="GIY_YIG"/>
    <property type="match status" value="1"/>
</dbReference>
<dbReference type="PROSITE" id="PS50151">
    <property type="entry name" value="UVR"/>
    <property type="match status" value="1"/>
</dbReference>
<dbReference type="PROSITE" id="PS50165">
    <property type="entry name" value="UVRC"/>
    <property type="match status" value="1"/>
</dbReference>
<keyword id="KW-0963">Cytoplasm</keyword>
<keyword id="KW-0227">DNA damage</keyword>
<keyword id="KW-0228">DNA excision</keyword>
<keyword id="KW-0234">DNA repair</keyword>
<keyword id="KW-0267">Excision nuclease</keyword>
<keyword id="KW-1185">Reference proteome</keyword>
<keyword id="KW-0742">SOS response</keyword>
<feature type="chain" id="PRO_1000077772" description="UvrABC system protein C">
    <location>
        <begin position="1"/>
        <end position="622"/>
    </location>
</feature>
<feature type="domain" description="GIY-YIG" evidence="1">
    <location>
        <begin position="13"/>
        <end position="92"/>
    </location>
</feature>
<feature type="domain" description="UVR" evidence="1">
    <location>
        <begin position="204"/>
        <end position="239"/>
    </location>
</feature>
<proteinExistence type="inferred from homology"/>
<accession>A5N361</accession>
<organism>
    <name type="scientific">Clostridium kluyveri (strain ATCC 8527 / DSM 555 / NBRC 12016 / NCIMB 10680 / K1)</name>
    <dbReference type="NCBI Taxonomy" id="431943"/>
    <lineage>
        <taxon>Bacteria</taxon>
        <taxon>Bacillati</taxon>
        <taxon>Bacillota</taxon>
        <taxon>Clostridia</taxon>
        <taxon>Eubacteriales</taxon>
        <taxon>Clostridiaceae</taxon>
        <taxon>Clostridium</taxon>
    </lineage>
</organism>
<sequence length="622" mass="72503">MFDFEQQLKILPDKPGVYLMKNSLGEVIYVGKAKILKNRVRQYFQKSKNHSEKVRTMVKHISEFEYIVTDSEMEALVLECNLIKKYRPRYNILLKDDKIYPLIKITLNEDFPRIICARNKIKDGAKYFGPYISTGAVYETMEVIKKIFPIRDCKLNIKKGNVKVRPCLNYHIGLCKAPCTGHISKEEYGKIISGVMDFLSGKNKDIIRKLKEDMDTLSENMEFEKAAELRDKIFALEKIIEKQKITTGGFEDEDFINIHSDEKDSCIQVFFSRTGKIIGREHFIIEDTQDLPKGEIVANFIKEFYGGTAYIAKTIYVPEIYDVQLLEDWLSIKKDSKVYIKIPQKGDKKAILNLVEKNARTTLQNFKLKFIQDKKMYETSLEELMEILNLDDIPHRIEAYDVSNIQGVDSVGTMVVFENGRPKHNDYRRFKINEVKGANDYESMKEILRRRFQNGMEEIKRIKERKLEFSAGKFSFFPDLILMDGGKIQVSAALEVLKEFNIDITVCGMVKDDKHRTRGLIYRNEEMPLNRNSNIIKLITRIQDEVHRFAVTYHRSLRSKRVLHSVLEDIPNVGVKRRKELLKRFLSVENIKKASMEELISTPSIDMRTAESIISYFRGYKS</sequence>
<name>UVRC_CLOK5</name>
<gene>
    <name evidence="1" type="primary">uvrC</name>
    <name type="ordered locus">CKL_3566</name>
</gene>